<name>FAPR_STAEQ</name>
<reference key="1">
    <citation type="journal article" date="2005" name="J. Bacteriol.">
        <title>Insights on evolution of virulence and resistance from the complete genome analysis of an early methicillin-resistant Staphylococcus aureus strain and a biofilm-producing methicillin-resistant Staphylococcus epidermidis strain.</title>
        <authorList>
            <person name="Gill S.R."/>
            <person name="Fouts D.E."/>
            <person name="Archer G.L."/>
            <person name="Mongodin E.F."/>
            <person name="DeBoy R.T."/>
            <person name="Ravel J."/>
            <person name="Paulsen I.T."/>
            <person name="Kolonay J.F."/>
            <person name="Brinkac L.M."/>
            <person name="Beanan M.J."/>
            <person name="Dodson R.J."/>
            <person name="Daugherty S.C."/>
            <person name="Madupu R."/>
            <person name="Angiuoli S.V."/>
            <person name="Durkin A.S."/>
            <person name="Haft D.H."/>
            <person name="Vamathevan J.J."/>
            <person name="Khouri H."/>
            <person name="Utterback T.R."/>
            <person name="Lee C."/>
            <person name="Dimitrov G."/>
            <person name="Jiang L."/>
            <person name="Qin H."/>
            <person name="Weidman J."/>
            <person name="Tran K."/>
            <person name="Kang K.H."/>
            <person name="Hance I.R."/>
            <person name="Nelson K.E."/>
            <person name="Fraser C.M."/>
        </authorList>
    </citation>
    <scope>NUCLEOTIDE SEQUENCE [LARGE SCALE GENOMIC DNA]</scope>
    <source>
        <strain>ATCC 35984 / DSM 28319 / BCRC 17069 / CCUG 31568 / BM 3577 / RP62A</strain>
    </source>
</reference>
<protein>
    <recommendedName>
        <fullName evidence="1">Transcription factor FapR</fullName>
    </recommendedName>
    <alternativeName>
        <fullName evidence="1">Fatty acid and phospholipid biosynthesis regulator</fullName>
    </alternativeName>
</protein>
<accession>Q5HPW3</accession>
<dbReference type="EMBL" id="CP000029">
    <property type="protein sequence ID" value="AAW54117.1"/>
    <property type="status" value="ALT_INIT"/>
    <property type="molecule type" value="Genomic_DNA"/>
</dbReference>
<dbReference type="RefSeq" id="WP_001830099.1">
    <property type="nucleotide sequence ID" value="NC_002976.3"/>
</dbReference>
<dbReference type="SMR" id="Q5HPW3"/>
<dbReference type="STRING" id="176279.SERP0794"/>
<dbReference type="GeneID" id="50018959"/>
<dbReference type="KEGG" id="ser:SERP0794"/>
<dbReference type="eggNOG" id="COG1349">
    <property type="taxonomic scope" value="Bacteria"/>
</dbReference>
<dbReference type="HOGENOM" id="CLU_095708_0_0_9"/>
<dbReference type="Proteomes" id="UP000000531">
    <property type="component" value="Chromosome"/>
</dbReference>
<dbReference type="GO" id="GO:0003677">
    <property type="term" value="F:DNA binding"/>
    <property type="evidence" value="ECO:0007669"/>
    <property type="project" value="UniProtKB-KW"/>
</dbReference>
<dbReference type="GO" id="GO:0003700">
    <property type="term" value="F:DNA-binding transcription factor activity"/>
    <property type="evidence" value="ECO:0007669"/>
    <property type="project" value="UniProtKB-UniRule"/>
</dbReference>
<dbReference type="GO" id="GO:0006633">
    <property type="term" value="P:fatty acid biosynthetic process"/>
    <property type="evidence" value="ECO:0007669"/>
    <property type="project" value="UniProtKB-KW"/>
</dbReference>
<dbReference type="GO" id="GO:0045892">
    <property type="term" value="P:negative regulation of DNA-templated transcription"/>
    <property type="evidence" value="ECO:0007669"/>
    <property type="project" value="UniProtKB-UniRule"/>
</dbReference>
<dbReference type="GO" id="GO:0045717">
    <property type="term" value="P:negative regulation of fatty acid biosynthetic process"/>
    <property type="evidence" value="ECO:0007669"/>
    <property type="project" value="UniProtKB-UniRule"/>
</dbReference>
<dbReference type="Gene3D" id="3.10.129.10">
    <property type="entry name" value="Hotdog Thioesterase"/>
    <property type="match status" value="1"/>
</dbReference>
<dbReference type="Gene3D" id="1.10.10.10">
    <property type="entry name" value="Winged helix-like DNA-binding domain superfamily/Winged helix DNA-binding domain"/>
    <property type="match status" value="1"/>
</dbReference>
<dbReference type="HAMAP" id="MF_01814">
    <property type="entry name" value="Transcrip_fact_FapR"/>
    <property type="match status" value="1"/>
</dbReference>
<dbReference type="InterPro" id="IPR029069">
    <property type="entry name" value="HotDog_dom_sf"/>
</dbReference>
<dbReference type="InterPro" id="IPR017275">
    <property type="entry name" value="Transcription_factor_FapR"/>
</dbReference>
<dbReference type="InterPro" id="IPR036388">
    <property type="entry name" value="WH-like_DNA-bd_sf"/>
</dbReference>
<dbReference type="NCBIfam" id="NF003359">
    <property type="entry name" value="PRK04424.1"/>
    <property type="match status" value="1"/>
</dbReference>
<dbReference type="PIRSF" id="PIRSF037733">
    <property type="entry name" value="Transcription_factor_FapR"/>
    <property type="match status" value="1"/>
</dbReference>
<dbReference type="SUPFAM" id="SSF54637">
    <property type="entry name" value="Thioesterase/thiol ester dehydrase-isomerase"/>
    <property type="match status" value="1"/>
</dbReference>
<evidence type="ECO:0000255" key="1">
    <source>
        <dbReference type="HAMAP-Rule" id="MF_01814"/>
    </source>
</evidence>
<evidence type="ECO:0000305" key="2"/>
<proteinExistence type="inferred from homology"/>
<gene>
    <name evidence="1" type="primary">fapR</name>
    <name type="ordered locus">SERP0794</name>
</gene>
<feature type="chain" id="PRO_0000172834" description="Transcription factor FapR">
    <location>
        <begin position="1"/>
        <end position="186"/>
    </location>
</feature>
<organism>
    <name type="scientific">Staphylococcus epidermidis (strain ATCC 35984 / DSM 28319 / BCRC 17069 / CCUG 31568 / BM 3577 / RP62A)</name>
    <dbReference type="NCBI Taxonomy" id="176279"/>
    <lineage>
        <taxon>Bacteria</taxon>
        <taxon>Bacillati</taxon>
        <taxon>Bacillota</taxon>
        <taxon>Bacilli</taxon>
        <taxon>Bacillales</taxon>
        <taxon>Staphylococcaceae</taxon>
        <taxon>Staphylococcus</taxon>
    </lineage>
</organism>
<comment type="function">
    <text evidence="1">Transcriptional factor involved in regulation of membrane lipid biosynthesis by repressing genes involved in fatty acid and phospholipid metabolism.</text>
</comment>
<comment type="similarity">
    <text evidence="1">Belongs to the FapR family.</text>
</comment>
<comment type="sequence caution" evidence="2">
    <conflict type="erroneous initiation">
        <sequence resource="EMBL-CDS" id="AAW54117"/>
    </conflict>
</comment>
<sequence length="186" mass="21421">MKLKKNDRRVAIKEAIELNPFITDYELCEKFDVSIQTIRLDRTHLNIPELRKRIKLVAEQNYGRIKSIEANEIIGDLIQVNPDVSAQSLIEITIDSVFAKSEIARGHVLFAQANSLCVALIHKPIVLTHESQVEFKEKVKLNDTVRADARVIDITDKHYIIEVNSYVSDMLVFKGKFKMYYTSEDE</sequence>
<keyword id="KW-0238">DNA-binding</keyword>
<keyword id="KW-0275">Fatty acid biosynthesis</keyword>
<keyword id="KW-0276">Fatty acid metabolism</keyword>
<keyword id="KW-0444">Lipid biosynthesis</keyword>
<keyword id="KW-0443">Lipid metabolism</keyword>
<keyword id="KW-1185">Reference proteome</keyword>
<keyword id="KW-0678">Repressor</keyword>
<keyword id="KW-0804">Transcription</keyword>
<keyword id="KW-0805">Transcription regulation</keyword>